<accession>Q729H8</accession>
<proteinExistence type="inferred from homology"/>
<comment type="function">
    <text evidence="1">Part of the outer membrane protein assembly complex, which is involved in assembly and insertion of beta-barrel proteins into the outer membrane.</text>
</comment>
<comment type="subunit">
    <text evidence="1">Part of the Bam complex.</text>
</comment>
<comment type="subcellular location">
    <subcellularLocation>
        <location evidence="1">Cell outer membrane</location>
    </subcellularLocation>
</comment>
<comment type="similarity">
    <text evidence="1">Belongs to the BamA family.</text>
</comment>
<protein>
    <recommendedName>
        <fullName evidence="1">Outer membrane protein assembly factor BamA</fullName>
    </recommendedName>
</protein>
<gene>
    <name evidence="1" type="primary">bamA</name>
    <name type="ordered locus">DVU_2373</name>
</gene>
<evidence type="ECO:0000255" key="1">
    <source>
        <dbReference type="HAMAP-Rule" id="MF_01430"/>
    </source>
</evidence>
<evidence type="ECO:0000255" key="2">
    <source>
        <dbReference type="PROSITE-ProRule" id="PRU01115"/>
    </source>
</evidence>
<dbReference type="EMBL" id="AE017285">
    <property type="protein sequence ID" value="AAS96846.1"/>
    <property type="molecule type" value="Genomic_DNA"/>
</dbReference>
<dbReference type="SMR" id="Q729H8"/>
<dbReference type="STRING" id="882.DVU_2373"/>
<dbReference type="PaxDb" id="882-DVU_2373"/>
<dbReference type="EnsemblBacteria" id="AAS96846">
    <property type="protein sequence ID" value="AAS96846"/>
    <property type="gene ID" value="DVU_2373"/>
</dbReference>
<dbReference type="KEGG" id="dvu:DVU_2373"/>
<dbReference type="eggNOG" id="COG4775">
    <property type="taxonomic scope" value="Bacteria"/>
</dbReference>
<dbReference type="HOGENOM" id="CLU_007664_1_1_7"/>
<dbReference type="PhylomeDB" id="Q729H8"/>
<dbReference type="Proteomes" id="UP000002194">
    <property type="component" value="Chromosome"/>
</dbReference>
<dbReference type="GO" id="GO:0009279">
    <property type="term" value="C:cell outer membrane"/>
    <property type="evidence" value="ECO:0007669"/>
    <property type="project" value="UniProtKB-SubCell"/>
</dbReference>
<dbReference type="GO" id="GO:0071709">
    <property type="term" value="P:membrane assembly"/>
    <property type="evidence" value="ECO:0007669"/>
    <property type="project" value="InterPro"/>
</dbReference>
<dbReference type="Gene3D" id="3.10.20.310">
    <property type="entry name" value="membrane protein fhac"/>
    <property type="match status" value="5"/>
</dbReference>
<dbReference type="Gene3D" id="2.40.160.50">
    <property type="entry name" value="membrane protein fhac: a member of the omp85/tpsb transporter family"/>
    <property type="match status" value="1"/>
</dbReference>
<dbReference type="HAMAP" id="MF_01430">
    <property type="entry name" value="OM_assembly_BamA"/>
    <property type="match status" value="1"/>
</dbReference>
<dbReference type="InterPro" id="IPR000184">
    <property type="entry name" value="Bac_surfAg_D15"/>
</dbReference>
<dbReference type="InterPro" id="IPR010827">
    <property type="entry name" value="BamA/TamA_POTRA"/>
</dbReference>
<dbReference type="InterPro" id="IPR039910">
    <property type="entry name" value="D15-like"/>
</dbReference>
<dbReference type="InterPro" id="IPR023707">
    <property type="entry name" value="OM_assembly_BamA"/>
</dbReference>
<dbReference type="InterPro" id="IPR034746">
    <property type="entry name" value="POTRA"/>
</dbReference>
<dbReference type="NCBIfam" id="TIGR03303">
    <property type="entry name" value="OM_YaeT"/>
    <property type="match status" value="1"/>
</dbReference>
<dbReference type="PANTHER" id="PTHR12815:SF18">
    <property type="entry name" value="SORTING AND ASSEMBLY MACHINERY COMPONENT 50 HOMOLOG"/>
    <property type="match status" value="1"/>
</dbReference>
<dbReference type="PANTHER" id="PTHR12815">
    <property type="entry name" value="SORTING AND ASSEMBLY MACHINERY SAMM50 PROTEIN FAMILY MEMBER"/>
    <property type="match status" value="1"/>
</dbReference>
<dbReference type="Pfam" id="PF01103">
    <property type="entry name" value="Omp85"/>
    <property type="match status" value="1"/>
</dbReference>
<dbReference type="Pfam" id="PF07244">
    <property type="entry name" value="POTRA"/>
    <property type="match status" value="5"/>
</dbReference>
<dbReference type="PIRSF" id="PIRSF006076">
    <property type="entry name" value="OM_assembly_OMP85"/>
    <property type="match status" value="1"/>
</dbReference>
<dbReference type="PROSITE" id="PS51779">
    <property type="entry name" value="POTRA"/>
    <property type="match status" value="5"/>
</dbReference>
<sequence length="791" mass="88879">MYGSFTQLGDSFSIDLRVVDALGVKPAKPFFIQKQGIINILPAVDELVDRVAGEFTSGNAIADVKVRGTKVLDPDVVLMRLSTRKGDPIDPAAINKEIKRIWDLGYFSDVQASVEQGGDGTVLVYTVTEKPRIDNIVIEGSDKVGHDDILAAMSSKTGSVLNDKLLAQDLQKVTELYRKEGFYLAHVTHRVEARQGAASATLVLNVEEGNKLYIKKVKIEGLKELSESEVKDILALSERGMFSWFTGTGVLKDELLERDSAAITAYCLNHGYVDALVSAPKVDYEEDGIIVSFAVKEGPRYKLGKIGFDGELIDTDERLLKVVKLDDHKKDNQYFALDVMQTDDKLLSDYYADYGYAFAEINSRTQKSAEEHVIDVTYVIRKRQKVYINRVLVEGNQKTRDNVVLREMRIADGDMFEGAKLRRSNERLNRTRYFSQVDTELVPTQKEDEVDLKVKVKEQNTGALIGGVGYSTFYQFGVSGTIMERNLFGKGYYASLQAFFSGKRNSFIASFTNPRVNDGDLSFGNDAYISREYFDDFSKNTIGDTIRFALPVGEYSTVGWGYRLDRYELYDIDDDAAKIIKEREGENISSVAHVRFTRDTTDSKEKPTKGTIFKTFNEFGGGPIGGDDDFIKPVVEFQAYHQLAPNHVLHGRTRGGAVLENGQGDVPVFERFYIGGIDSIRGYNSRDISPRDPESGDRIGGDRMAFVNLEYIWVFKPDLGLALVPFFDMGINYDSSAEFNWDDELKKSVGLEMRWRSPMGDLRFAYGFPLDEGRDGEQHSGRFEFSMGQFF</sequence>
<name>BAMA_NITV2</name>
<keyword id="KW-0998">Cell outer membrane</keyword>
<keyword id="KW-0472">Membrane</keyword>
<keyword id="KW-1185">Reference proteome</keyword>
<keyword id="KW-0677">Repeat</keyword>
<keyword id="KW-0812">Transmembrane</keyword>
<keyword id="KW-1134">Transmembrane beta strand</keyword>
<reference key="1">
    <citation type="journal article" date="2004" name="Nat. Biotechnol.">
        <title>The genome sequence of the anaerobic, sulfate-reducing bacterium Desulfovibrio vulgaris Hildenborough.</title>
        <authorList>
            <person name="Heidelberg J.F."/>
            <person name="Seshadri R."/>
            <person name="Haveman S.A."/>
            <person name="Hemme C.L."/>
            <person name="Paulsen I.T."/>
            <person name="Kolonay J.F."/>
            <person name="Eisen J.A."/>
            <person name="Ward N.L."/>
            <person name="Methe B.A."/>
            <person name="Brinkac L.M."/>
            <person name="Daugherty S.C."/>
            <person name="DeBoy R.T."/>
            <person name="Dodson R.J."/>
            <person name="Durkin A.S."/>
            <person name="Madupu R."/>
            <person name="Nelson W.C."/>
            <person name="Sullivan S.A."/>
            <person name="Fouts D.E."/>
            <person name="Haft D.H."/>
            <person name="Selengut J."/>
            <person name="Peterson J.D."/>
            <person name="Davidsen T.M."/>
            <person name="Zafar N."/>
            <person name="Zhou L."/>
            <person name="Radune D."/>
            <person name="Dimitrov G."/>
            <person name="Hance M."/>
            <person name="Tran K."/>
            <person name="Khouri H.M."/>
            <person name="Gill J."/>
            <person name="Utterback T.R."/>
            <person name="Feldblyum T.V."/>
            <person name="Wall J.D."/>
            <person name="Voordouw G."/>
            <person name="Fraser C.M."/>
        </authorList>
    </citation>
    <scope>NUCLEOTIDE SEQUENCE [LARGE SCALE GENOMIC DNA]</scope>
    <source>
        <strain>ATCC 29579 / DSM 644 / CCUG 34227 / NCIMB 8303 / VKM B-1760 / Hildenborough</strain>
    </source>
</reference>
<feature type="chain" id="PRO_0000417614" description="Outer membrane protein assembly factor BamA">
    <location>
        <begin position="1"/>
        <end position="791"/>
    </location>
</feature>
<feature type="domain" description="POTRA 1" evidence="2">
    <location>
        <begin position="59"/>
        <end position="130"/>
    </location>
</feature>
<feature type="domain" description="POTRA 2" evidence="2">
    <location>
        <begin position="131"/>
        <end position="209"/>
    </location>
</feature>
<feature type="domain" description="POTRA 3" evidence="2">
    <location>
        <begin position="212"/>
        <end position="298"/>
    </location>
</feature>
<feature type="domain" description="POTRA 4" evidence="2">
    <location>
        <begin position="301"/>
        <end position="383"/>
    </location>
</feature>
<feature type="domain" description="POTRA 5" evidence="2">
    <location>
        <begin position="386"/>
        <end position="459"/>
    </location>
</feature>
<organism>
    <name type="scientific">Nitratidesulfovibrio vulgaris (strain ATCC 29579 / DSM 644 / CCUG 34227 / NCIMB 8303 / VKM B-1760 / Hildenborough)</name>
    <name type="common">Desulfovibrio vulgaris</name>
    <dbReference type="NCBI Taxonomy" id="882"/>
    <lineage>
        <taxon>Bacteria</taxon>
        <taxon>Pseudomonadati</taxon>
        <taxon>Thermodesulfobacteriota</taxon>
        <taxon>Desulfovibrionia</taxon>
        <taxon>Desulfovibrionales</taxon>
        <taxon>Desulfovibrionaceae</taxon>
        <taxon>Nitratidesulfovibrio</taxon>
    </lineage>
</organism>